<proteinExistence type="evidence at protein level"/>
<organism>
    <name type="scientific">Rattus norvegicus</name>
    <name type="common">Rat</name>
    <dbReference type="NCBI Taxonomy" id="10116"/>
    <lineage>
        <taxon>Eukaryota</taxon>
        <taxon>Metazoa</taxon>
        <taxon>Chordata</taxon>
        <taxon>Craniata</taxon>
        <taxon>Vertebrata</taxon>
        <taxon>Euteleostomi</taxon>
        <taxon>Mammalia</taxon>
        <taxon>Eutheria</taxon>
        <taxon>Euarchontoglires</taxon>
        <taxon>Glires</taxon>
        <taxon>Rodentia</taxon>
        <taxon>Myomorpha</taxon>
        <taxon>Muroidea</taxon>
        <taxon>Muridae</taxon>
        <taxon>Murinae</taxon>
        <taxon>Rattus</taxon>
    </lineage>
</organism>
<reference key="1">
    <citation type="journal article" date="1997" name="Pflugers Arch.">
        <title>Identification and functional characterization of a calcium channel gamma subunit.</title>
        <authorList>
            <person name="Eberst R."/>
            <person name="Dai S."/>
            <person name="Klugbauer N."/>
            <person name="Hofmann F."/>
        </authorList>
    </citation>
    <scope>NUCLEOTIDE SEQUENCE [MRNA]</scope>
    <scope>FUNCTION</scope>
    <scope>SUBUNIT</scope>
    <scope>TISSUE SPECIFICITY</scope>
    <source>
        <tissue>Skeletal muscle</tissue>
    </source>
</reference>
<keyword id="KW-0106">Calcium</keyword>
<keyword id="KW-0107">Calcium channel</keyword>
<keyword id="KW-0109">Calcium transport</keyword>
<keyword id="KW-1003">Cell membrane</keyword>
<keyword id="KW-1015">Disulfide bond</keyword>
<keyword id="KW-0325">Glycoprotein</keyword>
<keyword id="KW-0407">Ion channel</keyword>
<keyword id="KW-0406">Ion transport</keyword>
<keyword id="KW-0472">Membrane</keyword>
<keyword id="KW-1185">Reference proteome</keyword>
<keyword id="KW-0812">Transmembrane</keyword>
<keyword id="KW-1133">Transmembrane helix</keyword>
<keyword id="KW-0813">Transport</keyword>
<keyword id="KW-0851">Voltage-gated channel</keyword>
<protein>
    <recommendedName>
        <fullName>Voltage-dependent calcium channel gamma-1 subunit</fullName>
    </recommendedName>
    <alternativeName>
        <fullName>Dihydropyridine-sensitive L-type, skeletal muscle calcium channel subunit gamma</fullName>
    </alternativeName>
</protein>
<dbReference type="EMBL" id="Y09453">
    <property type="protein sequence ID" value="CAA70602.1"/>
    <property type="molecule type" value="mRNA"/>
</dbReference>
<dbReference type="RefSeq" id="NP_062128.1">
    <property type="nucleotide sequence ID" value="NM_019255.1"/>
</dbReference>
<dbReference type="SMR" id="P97707"/>
<dbReference type="FunCoup" id="P97707">
    <property type="interactions" value="359"/>
</dbReference>
<dbReference type="STRING" id="10116.ENSRNOP00000004349"/>
<dbReference type="GlyCosmos" id="P97707">
    <property type="glycosylation" value="2 sites, No reported glycans"/>
</dbReference>
<dbReference type="GlyGen" id="P97707">
    <property type="glycosylation" value="2 sites"/>
</dbReference>
<dbReference type="PhosphoSitePlus" id="P97707"/>
<dbReference type="PaxDb" id="10116-ENSRNOP00000004349"/>
<dbReference type="GeneID" id="29658"/>
<dbReference type="KEGG" id="rno:29658"/>
<dbReference type="UCSC" id="RGD:2249">
    <property type="organism name" value="rat"/>
</dbReference>
<dbReference type="AGR" id="RGD:2249"/>
<dbReference type="CTD" id="786"/>
<dbReference type="RGD" id="2249">
    <property type="gene designation" value="Cacng1"/>
</dbReference>
<dbReference type="eggNOG" id="ENOG502QT5N">
    <property type="taxonomic scope" value="Eukaryota"/>
</dbReference>
<dbReference type="InParanoid" id="P97707"/>
<dbReference type="OrthoDB" id="72886at9989"/>
<dbReference type="PhylomeDB" id="P97707"/>
<dbReference type="PRO" id="PR:P97707"/>
<dbReference type="Proteomes" id="UP000002494">
    <property type="component" value="Unplaced"/>
</dbReference>
<dbReference type="GO" id="GO:1990454">
    <property type="term" value="C:L-type voltage-gated calcium channel complex"/>
    <property type="evidence" value="ECO:0000315"/>
    <property type="project" value="UniProtKB"/>
</dbReference>
<dbReference type="GO" id="GO:0005886">
    <property type="term" value="C:plasma membrane"/>
    <property type="evidence" value="ECO:0000250"/>
    <property type="project" value="UniProtKB"/>
</dbReference>
<dbReference type="GO" id="GO:0042383">
    <property type="term" value="C:sarcolemma"/>
    <property type="evidence" value="ECO:0000250"/>
    <property type="project" value="UniProtKB"/>
</dbReference>
<dbReference type="GO" id="GO:0030315">
    <property type="term" value="C:T-tubule"/>
    <property type="evidence" value="ECO:0000250"/>
    <property type="project" value="UniProtKB"/>
</dbReference>
<dbReference type="GO" id="GO:0005246">
    <property type="term" value="F:calcium channel regulator activity"/>
    <property type="evidence" value="ECO:0000315"/>
    <property type="project" value="UniProtKB"/>
</dbReference>
<dbReference type="GO" id="GO:0005245">
    <property type="term" value="F:voltage-gated calcium channel activity"/>
    <property type="evidence" value="ECO:0000266"/>
    <property type="project" value="RGD"/>
</dbReference>
<dbReference type="GO" id="GO:0070588">
    <property type="term" value="P:calcium ion transmembrane transport"/>
    <property type="evidence" value="ECO:0000266"/>
    <property type="project" value="RGD"/>
</dbReference>
<dbReference type="GO" id="GO:0051649">
    <property type="term" value="P:establishment of localization in cell"/>
    <property type="evidence" value="ECO:0000266"/>
    <property type="project" value="RGD"/>
</dbReference>
<dbReference type="GO" id="GO:1902514">
    <property type="term" value="P:regulation of calcium ion transmembrane transport via high voltage-gated calcium channel"/>
    <property type="evidence" value="ECO:0000314"/>
    <property type="project" value="UniProtKB"/>
</dbReference>
<dbReference type="GO" id="GO:0070296">
    <property type="term" value="P:sarcoplasmic reticulum calcium ion transport"/>
    <property type="evidence" value="ECO:0000266"/>
    <property type="project" value="RGD"/>
</dbReference>
<dbReference type="FunFam" id="1.20.140.150:FF:000031">
    <property type="entry name" value="Voltage-dependent calcium channel gamma-1 subunit"/>
    <property type="match status" value="1"/>
</dbReference>
<dbReference type="Gene3D" id="1.20.140.150">
    <property type="match status" value="1"/>
</dbReference>
<dbReference type="InterPro" id="IPR004031">
    <property type="entry name" value="PMP22/EMP/MP20/Claudin"/>
</dbReference>
<dbReference type="InterPro" id="IPR005421">
    <property type="entry name" value="VDCC_g1su"/>
</dbReference>
<dbReference type="InterPro" id="IPR008368">
    <property type="entry name" value="VDCC_gsu"/>
</dbReference>
<dbReference type="PANTHER" id="PTHR15025:SF1">
    <property type="entry name" value="VOLTAGE-DEPENDENT CALCIUM CHANNEL GAMMA-1 SUBUNIT"/>
    <property type="match status" value="1"/>
</dbReference>
<dbReference type="PANTHER" id="PTHR15025">
    <property type="entry name" value="VOLTAGE-DEPENDENT CALCIUM CHANNEL GAMMA-1 SUBUNIT-RELATED"/>
    <property type="match status" value="1"/>
</dbReference>
<dbReference type="Pfam" id="PF13903">
    <property type="entry name" value="Claudin_2"/>
    <property type="match status" value="1"/>
</dbReference>
<dbReference type="PRINTS" id="PR01792">
    <property type="entry name" value="VDCCGAMMA"/>
</dbReference>
<dbReference type="PRINTS" id="PR01601">
    <property type="entry name" value="VDCCGAMMA1"/>
</dbReference>
<accession>P97707</accession>
<comment type="function">
    <text evidence="3">Regulatory subunit of the voltage-gated calcium channel that gives rise to L-type calcium currents in skeletal muscle. Regulates channel inactivation kinetics.</text>
</comment>
<comment type="subunit">
    <text evidence="1 5">Component of a calcium channel complex consisting of a pore-forming alpha subunit (CACNA1S) and the ancillary subunits CACNB1 or CACNB2, CACNG1 and CACNA2D1 (Probable). The channel complex contains alpha, beta, gamma and delta subunits in a 1:1:1:1 ratio, i.e. it contains either CACNB1 or CACNB2 (By similarity).</text>
</comment>
<comment type="subcellular location">
    <subcellularLocation>
        <location evidence="1">Cell membrane</location>
        <location evidence="1">Sarcolemma</location>
        <topology evidence="1">Multi-pass membrane protein</topology>
    </subcellularLocation>
</comment>
<comment type="tissue specificity">
    <text evidence="3">Skeletal muscle.</text>
</comment>
<comment type="PTM">
    <text evidence="1">N-glycosylated.</text>
</comment>
<comment type="similarity">
    <text evidence="4">Belongs to the PMP-22/EMP/MP20 family. CACNG subfamily.</text>
</comment>
<gene>
    <name type="primary">Cacng1</name>
</gene>
<feature type="chain" id="PRO_0000164672" description="Voltage-dependent calcium channel gamma-1 subunit">
    <location>
        <begin position="1"/>
        <end position="223"/>
    </location>
</feature>
<feature type="topological domain" description="Cytoplasmic" evidence="4">
    <location>
        <begin position="1"/>
        <end position="10"/>
    </location>
</feature>
<feature type="transmembrane region" description="Helical" evidence="1">
    <location>
        <begin position="11"/>
        <end position="29"/>
    </location>
</feature>
<feature type="topological domain" description="Extracellular" evidence="4">
    <location>
        <begin position="30"/>
        <end position="109"/>
    </location>
</feature>
<feature type="transmembrane region" description="Helical" evidence="1">
    <location>
        <begin position="110"/>
        <end position="130"/>
    </location>
</feature>
<feature type="topological domain" description="Cytoplasmic" evidence="4">
    <location>
        <begin position="131"/>
        <end position="135"/>
    </location>
</feature>
<feature type="transmembrane region" description="Helical" evidence="1">
    <location>
        <begin position="136"/>
        <end position="156"/>
    </location>
</feature>
<feature type="topological domain" description="Extracellular" evidence="4">
    <location>
        <begin position="157"/>
        <end position="180"/>
    </location>
</feature>
<feature type="transmembrane region" description="Helical" evidence="1">
    <location>
        <begin position="181"/>
        <end position="205"/>
    </location>
</feature>
<feature type="topological domain" description="Cytoplasmic" evidence="4">
    <location>
        <begin position="206"/>
        <end position="223"/>
    </location>
</feature>
<feature type="glycosylation site" description="N-linked (GlcNAc...) asparagine" evidence="2">
    <location>
        <position position="43"/>
    </location>
</feature>
<feature type="glycosylation site" description="N-linked (GlcNAc...) asparagine" evidence="2">
    <location>
        <position position="80"/>
    </location>
</feature>
<feature type="disulfide bond" evidence="1">
    <location>
        <begin position="57"/>
        <end position="81"/>
    </location>
</feature>
<name>CCG1_RAT</name>
<sequence>MSQTKTAKVRVTLFFILAGGVLAMVAVVTDHWAVLSPHLEHHNETCVAAHFGLWRICTTWVAMHNQDKNCDGTIPAGEKNCSYFRHFNPGESSEIFEFTTQKEYSISAAAIAIFSLGFIIIGSICAFLSFGNKRDYLLRPASMFYAFAGLCLIVSVEVMRQSVKRMIDSEDTVWIEYYYSWSFACACAGFTLLFLGGLFLLLFSLPRMPQNPWESCMDTESEH</sequence>
<evidence type="ECO:0000250" key="1">
    <source>
        <dbReference type="UniProtKB" id="P19518"/>
    </source>
</evidence>
<evidence type="ECO:0000255" key="2"/>
<evidence type="ECO:0000269" key="3">
    <source>
    </source>
</evidence>
<evidence type="ECO:0000305" key="4"/>
<evidence type="ECO:0000305" key="5">
    <source>
    </source>
</evidence>